<sequence>MRVLIKNGIVVNADGQAKQDLLIESGIVRQLGTDISPQLPCEEIDASGCYVFPGGVDVHTHFNIDVGIARSCDDFFTGTRAAACGGTTTIIDHMGFGPNGCRLRHQLEVYRGYAAHKAVIDYSFHGVIQHINHAILDEIPMMVEEGLSSFKLYLTYQYKLNDDEVLQALRRLHESGALTTVHPENDAAIASKRAEFIAAGLTAPRYHALSRPLECEAEAIARMINLAQIAGNAPLYIVHLSNGLGLDYLRLARANHQPVWVETCPQYLLLDERSYDTEDGMKFILSPPLRNVREQDKLWCGISDGAIDVVATDHCTFSMAQRQQISKGDFSRCPNGLPGVENRMQLLFSSGVMTGRISPERFVELTSAMPARLFGLWPQKGILAPGSDGDVVIIDPRQSQQIQHRHLHDNADYSPWEGFTCQGAIVRTLSRGETIFCDGTFTGKAGRGRFLRRKPFVPPVL</sequence>
<proteinExistence type="inferred from homology"/>
<protein>
    <recommendedName>
        <fullName evidence="1">D-phenylhydantoinase</fullName>
        <ecNumber evidence="1">3.5.2.-</ecNumber>
    </recommendedName>
    <alternativeName>
        <fullName evidence="1">Hydantoin-utilizing enzyme HyuA</fullName>
    </alternativeName>
</protein>
<evidence type="ECO:0000255" key="1">
    <source>
        <dbReference type="HAMAP-Rule" id="MF_01644"/>
    </source>
</evidence>
<feature type="chain" id="PRO_1000186911" description="D-phenylhydantoinase">
    <location>
        <begin position="1"/>
        <end position="461"/>
    </location>
</feature>
<feature type="binding site" evidence="1">
    <location>
        <position position="59"/>
    </location>
    <ligand>
        <name>a divalent metal cation</name>
        <dbReference type="ChEBI" id="CHEBI:60240"/>
        <label>1</label>
    </ligand>
</feature>
<feature type="binding site" evidence="1">
    <location>
        <position position="61"/>
    </location>
    <ligand>
        <name>a divalent metal cation</name>
        <dbReference type="ChEBI" id="CHEBI:60240"/>
        <label>1</label>
    </ligand>
</feature>
<feature type="binding site" description="via carbamate group" evidence="1">
    <location>
        <position position="151"/>
    </location>
    <ligand>
        <name>a divalent metal cation</name>
        <dbReference type="ChEBI" id="CHEBI:60240"/>
        <label>1</label>
    </ligand>
</feature>
<feature type="binding site" description="via carbamate group" evidence="1">
    <location>
        <position position="151"/>
    </location>
    <ligand>
        <name>a divalent metal cation</name>
        <dbReference type="ChEBI" id="CHEBI:60240"/>
        <label>2</label>
    </ligand>
</feature>
<feature type="binding site" evidence="1">
    <location>
        <position position="156"/>
    </location>
    <ligand>
        <name>substrate</name>
    </ligand>
</feature>
<feature type="binding site" evidence="1">
    <location>
        <position position="182"/>
    </location>
    <ligand>
        <name>a divalent metal cation</name>
        <dbReference type="ChEBI" id="CHEBI:60240"/>
        <label>2</label>
    </ligand>
</feature>
<feature type="binding site" evidence="1">
    <location>
        <position position="239"/>
    </location>
    <ligand>
        <name>a divalent metal cation</name>
        <dbReference type="ChEBI" id="CHEBI:60240"/>
        <label>2</label>
    </ligand>
</feature>
<feature type="binding site" evidence="1">
    <location>
        <position position="286"/>
    </location>
    <ligand>
        <name>substrate</name>
    </ligand>
</feature>
<feature type="binding site" evidence="1">
    <location>
        <position position="313"/>
    </location>
    <ligand>
        <name>a divalent metal cation</name>
        <dbReference type="ChEBI" id="CHEBI:60240"/>
        <label>1</label>
    </ligand>
</feature>
<feature type="binding site" evidence="1">
    <location>
        <position position="335"/>
    </location>
    <ligand>
        <name>substrate</name>
    </ligand>
</feature>
<feature type="modified residue" description="N6-carboxylysine" evidence="1">
    <location>
        <position position="151"/>
    </location>
</feature>
<accession>B7MZ27</accession>
<keyword id="KW-0378">Hydrolase</keyword>
<keyword id="KW-0479">Metal-binding</keyword>
<dbReference type="EC" id="3.5.2.-" evidence="1"/>
<dbReference type="EMBL" id="CU928162">
    <property type="protein sequence ID" value="CAR09344.1"/>
    <property type="molecule type" value="Genomic_DNA"/>
</dbReference>
<dbReference type="RefSeq" id="WP_001264437.1">
    <property type="nucleotide sequence ID" value="NC_011745.1"/>
</dbReference>
<dbReference type="SMR" id="B7MZ27"/>
<dbReference type="KEGG" id="ecq:ECED1_3333"/>
<dbReference type="HOGENOM" id="CLU_015572_2_0_6"/>
<dbReference type="Proteomes" id="UP000000748">
    <property type="component" value="Chromosome"/>
</dbReference>
<dbReference type="GO" id="GO:0005829">
    <property type="term" value="C:cytosol"/>
    <property type="evidence" value="ECO:0007669"/>
    <property type="project" value="TreeGrafter"/>
</dbReference>
<dbReference type="GO" id="GO:0016812">
    <property type="term" value="F:hydrolase activity, acting on carbon-nitrogen (but not peptide) bonds, in cyclic amides"/>
    <property type="evidence" value="ECO:0007669"/>
    <property type="project" value="UniProtKB-UniRule"/>
</dbReference>
<dbReference type="GO" id="GO:0046872">
    <property type="term" value="F:metal ion binding"/>
    <property type="evidence" value="ECO:0007669"/>
    <property type="project" value="UniProtKB-KW"/>
</dbReference>
<dbReference type="GO" id="GO:0006208">
    <property type="term" value="P:pyrimidine nucleobase catabolic process"/>
    <property type="evidence" value="ECO:0007669"/>
    <property type="project" value="InterPro"/>
</dbReference>
<dbReference type="CDD" id="cd01314">
    <property type="entry name" value="D-HYD"/>
    <property type="match status" value="1"/>
</dbReference>
<dbReference type="FunFam" id="3.20.20.140:FF:000026">
    <property type="entry name" value="D-phenylhydantoinase"/>
    <property type="match status" value="1"/>
</dbReference>
<dbReference type="Gene3D" id="3.20.20.140">
    <property type="entry name" value="Metal-dependent hydrolases"/>
    <property type="match status" value="1"/>
</dbReference>
<dbReference type="Gene3D" id="2.30.40.10">
    <property type="entry name" value="Urease, subunit C, domain 1"/>
    <property type="match status" value="1"/>
</dbReference>
<dbReference type="HAMAP" id="MF_01644">
    <property type="entry name" value="D_hydantoinase"/>
    <property type="match status" value="1"/>
</dbReference>
<dbReference type="InterPro" id="IPR006680">
    <property type="entry name" value="Amidohydro-rel"/>
</dbReference>
<dbReference type="InterPro" id="IPR023766">
    <property type="entry name" value="D_phenylhydantoinase"/>
</dbReference>
<dbReference type="InterPro" id="IPR011778">
    <property type="entry name" value="Hydantoinase/dihydroPyrase"/>
</dbReference>
<dbReference type="InterPro" id="IPR011059">
    <property type="entry name" value="Metal-dep_hydrolase_composite"/>
</dbReference>
<dbReference type="InterPro" id="IPR032466">
    <property type="entry name" value="Metal_Hydrolase"/>
</dbReference>
<dbReference type="InterPro" id="IPR050378">
    <property type="entry name" value="Metallo-dep_Hydrolases_sf"/>
</dbReference>
<dbReference type="NCBIfam" id="TIGR02033">
    <property type="entry name" value="D-hydantoinase"/>
    <property type="match status" value="1"/>
</dbReference>
<dbReference type="PANTHER" id="PTHR11647:SF1">
    <property type="entry name" value="COLLAPSIN RESPONSE MEDIATOR PROTEIN"/>
    <property type="match status" value="1"/>
</dbReference>
<dbReference type="PANTHER" id="PTHR11647">
    <property type="entry name" value="HYDRANTOINASE/DIHYDROPYRIMIDINASE FAMILY MEMBER"/>
    <property type="match status" value="1"/>
</dbReference>
<dbReference type="Pfam" id="PF01979">
    <property type="entry name" value="Amidohydro_1"/>
    <property type="match status" value="1"/>
</dbReference>
<dbReference type="SUPFAM" id="SSF51338">
    <property type="entry name" value="Composite domain of metallo-dependent hydrolases"/>
    <property type="match status" value="2"/>
</dbReference>
<dbReference type="SUPFAM" id="SSF51556">
    <property type="entry name" value="Metallo-dependent hydrolases"/>
    <property type="match status" value="1"/>
</dbReference>
<comment type="function">
    <text evidence="1">Catalyzes the stereospecific hydrolysis of the cyclic amide bond of D-hydantoin derivatives with an aromatic side chains at the 5'-position. Has no activity on dihydropyrimidines. The physiological function is unknown.</text>
</comment>
<comment type="catalytic activity">
    <reaction evidence="1">
        <text>D-5-phenylhydantoin + H2O = N-carbamoyl-D-phenylglycine + H(+)</text>
        <dbReference type="Rhea" id="RHEA:51664"/>
        <dbReference type="ChEBI" id="CHEBI:15377"/>
        <dbReference type="ChEBI" id="CHEBI:15378"/>
        <dbReference type="ChEBI" id="CHEBI:140750"/>
        <dbReference type="ChEBI" id="CHEBI:140758"/>
    </reaction>
</comment>
<comment type="cofactor">
    <cofactor evidence="1">
        <name>a divalent metal cation</name>
        <dbReference type="ChEBI" id="CHEBI:60240"/>
    </cofactor>
    <text evidence="1">Binds 2 divalent metal cations per subunit.</text>
</comment>
<comment type="subunit">
    <text evidence="1">Homotetramer.</text>
</comment>
<comment type="PTM">
    <text evidence="1">Carboxylation allows a single lysine to coordinate two divalent metal cations.</text>
</comment>
<comment type="similarity">
    <text evidence="1">Belongs to the metallo-dependent hydrolases superfamily. Hydantoinase/dihydropyrimidinase family.</text>
</comment>
<reference key="1">
    <citation type="journal article" date="2009" name="PLoS Genet.">
        <title>Organised genome dynamics in the Escherichia coli species results in highly diverse adaptive paths.</title>
        <authorList>
            <person name="Touchon M."/>
            <person name="Hoede C."/>
            <person name="Tenaillon O."/>
            <person name="Barbe V."/>
            <person name="Baeriswyl S."/>
            <person name="Bidet P."/>
            <person name="Bingen E."/>
            <person name="Bonacorsi S."/>
            <person name="Bouchier C."/>
            <person name="Bouvet O."/>
            <person name="Calteau A."/>
            <person name="Chiapello H."/>
            <person name="Clermont O."/>
            <person name="Cruveiller S."/>
            <person name="Danchin A."/>
            <person name="Diard M."/>
            <person name="Dossat C."/>
            <person name="Karoui M.E."/>
            <person name="Frapy E."/>
            <person name="Garry L."/>
            <person name="Ghigo J.M."/>
            <person name="Gilles A.M."/>
            <person name="Johnson J."/>
            <person name="Le Bouguenec C."/>
            <person name="Lescat M."/>
            <person name="Mangenot S."/>
            <person name="Martinez-Jehanne V."/>
            <person name="Matic I."/>
            <person name="Nassif X."/>
            <person name="Oztas S."/>
            <person name="Petit M.A."/>
            <person name="Pichon C."/>
            <person name="Rouy Z."/>
            <person name="Ruf C.S."/>
            <person name="Schneider D."/>
            <person name="Tourret J."/>
            <person name="Vacherie B."/>
            <person name="Vallenet D."/>
            <person name="Medigue C."/>
            <person name="Rocha E.P.C."/>
            <person name="Denamur E."/>
        </authorList>
    </citation>
    <scope>NUCLEOTIDE SEQUENCE [LARGE SCALE GENOMIC DNA]</scope>
    <source>
        <strain>ED1a</strain>
    </source>
</reference>
<gene>
    <name evidence="1" type="primary">hyuA</name>
    <name type="ordered locus">ECED1_3333</name>
</gene>
<organism>
    <name type="scientific">Escherichia coli O81 (strain ED1a)</name>
    <dbReference type="NCBI Taxonomy" id="585397"/>
    <lineage>
        <taxon>Bacteria</taxon>
        <taxon>Pseudomonadati</taxon>
        <taxon>Pseudomonadota</taxon>
        <taxon>Gammaproteobacteria</taxon>
        <taxon>Enterobacterales</taxon>
        <taxon>Enterobacteriaceae</taxon>
        <taxon>Escherichia</taxon>
    </lineage>
</organism>
<name>PHYDA_ECO81</name>